<protein>
    <recommendedName>
        <fullName evidence="6">Tropomyosin</fullName>
    </recommendedName>
    <alternativeName>
        <fullName evidence="6">Allergen Chl n 1</fullName>
    </alternativeName>
    <allergenName evidence="7">Mim n 1</allergenName>
</protein>
<reference key="1">
    <citation type="journal article" date="2000" name="Mar. Biotechnol.">
        <title>Tropomyosin Is the Major Mollusk Allergen: Reverse Transcriptase Polymerase Chain Reaction, Expression and IgE Reactivity.</title>
        <authorList>
            <person name="Chu K.H."/>
            <person name="Wong S.H."/>
            <person name="Leung P.S."/>
        </authorList>
    </citation>
    <scope>NUCLEOTIDE SEQUENCE [MRNA]</scope>
    <scope>ALLERGEN</scope>
    <source>
        <tissue evidence="6">Adductor muscle</tissue>
    </source>
</reference>
<accession>Q9GZ69</accession>
<comment type="function">
    <text evidence="2">Tropomyosin, in association with the troponin complex, plays a central role in the calcium dependent regulation of muscle contraction.</text>
</comment>
<comment type="subunit">
    <text evidence="1">Homodimer.</text>
</comment>
<comment type="domain">
    <text evidence="7">The molecule is in a coiled coil structure that is formed by 2 polypeptide chains. The sequence exhibits a prominent seven-residues periodicity.</text>
</comment>
<comment type="allergen">
    <text evidence="5">Causes an allergic reaction in human. Binds to IgE of patients allergic to shellfish (mollusks and crustaceans).</text>
</comment>
<comment type="similarity">
    <text evidence="7">Belongs to the tropomyosin family.</text>
</comment>
<evidence type="ECO:0000250" key="1">
    <source>
        <dbReference type="UniProtKB" id="A2V735"/>
    </source>
</evidence>
<evidence type="ECO:0000250" key="2">
    <source>
        <dbReference type="UniProtKB" id="Q22866"/>
    </source>
</evidence>
<evidence type="ECO:0000255" key="3"/>
<evidence type="ECO:0000256" key="4">
    <source>
        <dbReference type="SAM" id="MobiDB-lite"/>
    </source>
</evidence>
<evidence type="ECO:0000269" key="5">
    <source>
    </source>
</evidence>
<evidence type="ECO:0000303" key="6">
    <source>
    </source>
</evidence>
<evidence type="ECO:0000305" key="7"/>
<proteinExistence type="evidence at protein level"/>
<organism>
    <name type="scientific">Mimachlamys nobilis</name>
    <name type="common">Noble scallop</name>
    <name type="synonym">Chlamys nobilis</name>
    <dbReference type="NCBI Taxonomy" id="106276"/>
    <lineage>
        <taxon>Eukaryota</taxon>
        <taxon>Metazoa</taxon>
        <taxon>Spiralia</taxon>
        <taxon>Lophotrochozoa</taxon>
        <taxon>Mollusca</taxon>
        <taxon>Bivalvia</taxon>
        <taxon>Autobranchia</taxon>
        <taxon>Pteriomorphia</taxon>
        <taxon>Pectinida</taxon>
        <taxon>Pectinoidea</taxon>
        <taxon>Pectinidae</taxon>
        <taxon>Mimachlamys</taxon>
    </lineage>
</organism>
<dbReference type="EMBL" id="AF216520">
    <property type="protein sequence ID" value="AAG08989.1"/>
    <property type="molecule type" value="mRNA"/>
</dbReference>
<dbReference type="SMR" id="Q9GZ69"/>
<dbReference type="GO" id="GO:0042803">
    <property type="term" value="F:protein homodimerization activity"/>
    <property type="evidence" value="ECO:0000250"/>
    <property type="project" value="UniProtKB"/>
</dbReference>
<dbReference type="GO" id="GO:0006937">
    <property type="term" value="P:regulation of muscle contraction"/>
    <property type="evidence" value="ECO:0000250"/>
    <property type="project" value="UniProtKB"/>
</dbReference>
<dbReference type="FunFam" id="1.20.5.170:FF:000005">
    <property type="entry name" value="Tropomyosin alpha-1 chain"/>
    <property type="match status" value="1"/>
</dbReference>
<dbReference type="FunFam" id="1.20.5.170:FF:000001">
    <property type="entry name" value="Tropomyosin alpha-1 chain isoform 1"/>
    <property type="match status" value="1"/>
</dbReference>
<dbReference type="FunFam" id="1.20.5.340:FF:000001">
    <property type="entry name" value="Tropomyosin alpha-1 chain isoform 2"/>
    <property type="match status" value="1"/>
</dbReference>
<dbReference type="Gene3D" id="1.20.5.170">
    <property type="match status" value="2"/>
</dbReference>
<dbReference type="Gene3D" id="1.20.5.340">
    <property type="match status" value="1"/>
</dbReference>
<dbReference type="InterPro" id="IPR000533">
    <property type="entry name" value="Tropomyosin"/>
</dbReference>
<dbReference type="PANTHER" id="PTHR19269">
    <property type="entry name" value="TROPOMYOSIN"/>
    <property type="match status" value="1"/>
</dbReference>
<dbReference type="Pfam" id="PF00261">
    <property type="entry name" value="Tropomyosin"/>
    <property type="match status" value="1"/>
</dbReference>
<dbReference type="PRINTS" id="PR00194">
    <property type="entry name" value="TROPOMYOSIN"/>
</dbReference>
<dbReference type="SUPFAM" id="SSF57997">
    <property type="entry name" value="Tropomyosin"/>
    <property type="match status" value="1"/>
</dbReference>
<dbReference type="PROSITE" id="PS00326">
    <property type="entry name" value="TROPOMYOSIN"/>
    <property type="match status" value="1"/>
</dbReference>
<keyword id="KW-0020">Allergen</keyword>
<keyword id="KW-0175">Coiled coil</keyword>
<keyword id="KW-0514">Muscle protein</keyword>
<keyword id="KW-0677">Repeat</keyword>
<sequence length="284" mass="32667">MDAIKKKMQAMKVDRENAQDLAEQMEQKLKDTETAKAKLEEEFNELQKKLTATENNYDTVNEQLQEANTKLENSEKQITQLESDVGGLQRRLTLLEEDYERSEEKLNSTTEKLEEASKAADESERNRKVLEGRSNSYEERIDELEKQLETAKNVATDADHKFDEAARKLAITEVDLERAETRLEAADAKVLELEEELTVVGANIKTLQVQNDQASQREDSYEETIRDLTKSLKDAENRATEAERQVVKLQKEVDRLEDELLAEKERYKAISDDLDQTFAEIAGY</sequence>
<name>TPM_MIMNO</name>
<feature type="chain" id="PRO_0000205668" description="Tropomyosin">
    <location>
        <begin position="1"/>
        <end position="284"/>
    </location>
</feature>
<feature type="region of interest" description="Disordered" evidence="4">
    <location>
        <begin position="1"/>
        <end position="27"/>
    </location>
</feature>
<feature type="region of interest" description="Disordered" evidence="4">
    <location>
        <begin position="99"/>
        <end position="131"/>
    </location>
</feature>
<feature type="coiled-coil region" evidence="3">
    <location>
        <begin position="1"/>
        <end position="273"/>
    </location>
</feature>
<feature type="compositionally biased region" description="Basic and acidic residues" evidence="4">
    <location>
        <begin position="102"/>
        <end position="131"/>
    </location>
</feature>